<feature type="chain" id="PRO_0000101313" description="Uncharacterized protein RP084">
    <location>
        <begin position="1"/>
        <end position="165"/>
    </location>
</feature>
<feature type="region of interest" description="Disordered" evidence="1">
    <location>
        <begin position="28"/>
        <end position="97"/>
    </location>
</feature>
<feature type="compositionally biased region" description="Pro residues" evidence="1">
    <location>
        <begin position="34"/>
        <end position="47"/>
    </location>
</feature>
<feature type="compositionally biased region" description="Polar residues" evidence="1">
    <location>
        <begin position="54"/>
        <end position="66"/>
    </location>
</feature>
<feature type="compositionally biased region" description="Polar residues" evidence="1">
    <location>
        <begin position="73"/>
        <end position="94"/>
    </location>
</feature>
<proteinExistence type="predicted"/>
<accession>Q9ZE63</accession>
<keyword id="KW-1185">Reference proteome</keyword>
<name>Y084_RICPR</name>
<evidence type="ECO:0000256" key="1">
    <source>
        <dbReference type="SAM" id="MobiDB-lite"/>
    </source>
</evidence>
<dbReference type="EMBL" id="AJ235270">
    <property type="protein sequence ID" value="CAA14554.1"/>
    <property type="molecule type" value="Genomic_DNA"/>
</dbReference>
<dbReference type="PIR" id="C71717">
    <property type="entry name" value="C71717"/>
</dbReference>
<dbReference type="RefSeq" id="NP_220477.1">
    <property type="nucleotide sequence ID" value="NC_000963.1"/>
</dbReference>
<dbReference type="RefSeq" id="WP_010886209.1">
    <property type="nucleotide sequence ID" value="NC_000963.1"/>
</dbReference>
<dbReference type="SMR" id="Q9ZE63"/>
<dbReference type="STRING" id="272947.gene:17555167"/>
<dbReference type="EnsemblBacteria" id="CAA14554">
    <property type="protein sequence ID" value="CAA14554"/>
    <property type="gene ID" value="CAA14554"/>
</dbReference>
<dbReference type="KEGG" id="rpr:RP084"/>
<dbReference type="PATRIC" id="fig|272947.5.peg.83"/>
<dbReference type="HOGENOM" id="CLU_1609544_0_0_5"/>
<dbReference type="Proteomes" id="UP000002480">
    <property type="component" value="Chromosome"/>
</dbReference>
<dbReference type="SUPFAM" id="SSF101447">
    <property type="entry name" value="Formin homology 2 domain (FH2 domain)"/>
    <property type="match status" value="1"/>
</dbReference>
<reference key="1">
    <citation type="journal article" date="1998" name="Nature">
        <title>The genome sequence of Rickettsia prowazekii and the origin of mitochondria.</title>
        <authorList>
            <person name="Andersson S.G.E."/>
            <person name="Zomorodipour A."/>
            <person name="Andersson J.O."/>
            <person name="Sicheritz-Ponten T."/>
            <person name="Alsmark U.C.M."/>
            <person name="Podowski R.M."/>
            <person name="Naeslund A.K."/>
            <person name="Eriksson A.-S."/>
            <person name="Winkler H.H."/>
            <person name="Kurland C.G."/>
        </authorList>
    </citation>
    <scope>NUCLEOTIDE SEQUENCE [LARGE SCALE GENOMIC DNA]</scope>
    <source>
        <strain>Madrid E</strain>
    </source>
</reference>
<organism>
    <name type="scientific">Rickettsia prowazekii (strain Madrid E)</name>
    <dbReference type="NCBI Taxonomy" id="272947"/>
    <lineage>
        <taxon>Bacteria</taxon>
        <taxon>Pseudomonadati</taxon>
        <taxon>Pseudomonadota</taxon>
        <taxon>Alphaproteobacteria</taxon>
        <taxon>Rickettsiales</taxon>
        <taxon>Rickettsiaceae</taxon>
        <taxon>Rickettsieae</taxon>
        <taxon>Rickettsia</taxon>
        <taxon>typhus group</taxon>
    </lineage>
</organism>
<sequence>MTITGKLKSVLLTYSFIISINLLTTMSEASAPSGNPPPPPPPPPPPIEGLNKFKSLNSPPNHQLDNSAKVEQAQHTNKNYTTSNIKTQLSQSLEVPTPTGEFGKKYSKLINPKTSKQNLKIEFPNKIISLVRDELTTKYFAADIEKILTLFSKKNDVILSEAKEK</sequence>
<gene>
    <name type="ordered locus">RP084</name>
</gene>
<protein>
    <recommendedName>
        <fullName>Uncharacterized protein RP084</fullName>
    </recommendedName>
</protein>